<keyword id="KW-0413">Isomerase</keyword>
<keyword id="KW-0460">Magnesium</keyword>
<keyword id="KW-0479">Metal-binding</keyword>
<keyword id="KW-0597">Phosphoprotein</keyword>
<accession>Q116W4</accession>
<feature type="chain" id="PRO_0000305689" description="Phosphoglucosamine mutase">
    <location>
        <begin position="1"/>
        <end position="489"/>
    </location>
</feature>
<feature type="active site" description="Phosphoserine intermediate" evidence="1">
    <location>
        <position position="136"/>
    </location>
</feature>
<feature type="binding site" description="via phosphate group" evidence="1">
    <location>
        <position position="136"/>
    </location>
    <ligand>
        <name>Mg(2+)</name>
        <dbReference type="ChEBI" id="CHEBI:18420"/>
    </ligand>
</feature>
<feature type="binding site" evidence="1">
    <location>
        <position position="275"/>
    </location>
    <ligand>
        <name>Mg(2+)</name>
        <dbReference type="ChEBI" id="CHEBI:18420"/>
    </ligand>
</feature>
<feature type="binding site" evidence="1">
    <location>
        <position position="277"/>
    </location>
    <ligand>
        <name>Mg(2+)</name>
        <dbReference type="ChEBI" id="CHEBI:18420"/>
    </ligand>
</feature>
<feature type="binding site" evidence="1">
    <location>
        <position position="279"/>
    </location>
    <ligand>
        <name>Mg(2+)</name>
        <dbReference type="ChEBI" id="CHEBI:18420"/>
    </ligand>
</feature>
<feature type="modified residue" description="Phosphoserine" evidence="1">
    <location>
        <position position="136"/>
    </location>
</feature>
<name>GLMM_TRIEI</name>
<evidence type="ECO:0000255" key="1">
    <source>
        <dbReference type="HAMAP-Rule" id="MF_01554"/>
    </source>
</evidence>
<protein>
    <recommendedName>
        <fullName evidence="1">Phosphoglucosamine mutase</fullName>
        <ecNumber evidence="1">5.4.2.10</ecNumber>
    </recommendedName>
</protein>
<organism>
    <name type="scientific">Trichodesmium erythraeum (strain IMS101)</name>
    <dbReference type="NCBI Taxonomy" id="203124"/>
    <lineage>
        <taxon>Bacteria</taxon>
        <taxon>Bacillati</taxon>
        <taxon>Cyanobacteriota</taxon>
        <taxon>Cyanophyceae</taxon>
        <taxon>Oscillatoriophycideae</taxon>
        <taxon>Oscillatoriales</taxon>
        <taxon>Microcoleaceae</taxon>
        <taxon>Trichodesmium</taxon>
    </lineage>
</organism>
<dbReference type="EC" id="5.4.2.10" evidence="1"/>
<dbReference type="EMBL" id="CP000393">
    <property type="protein sequence ID" value="ABG50460.1"/>
    <property type="molecule type" value="Genomic_DNA"/>
</dbReference>
<dbReference type="RefSeq" id="WP_011610846.1">
    <property type="nucleotide sequence ID" value="NC_008312.1"/>
</dbReference>
<dbReference type="SMR" id="Q116W4"/>
<dbReference type="STRING" id="203124.Tery_1095"/>
<dbReference type="KEGG" id="ter:Tery_1095"/>
<dbReference type="eggNOG" id="COG1109">
    <property type="taxonomic scope" value="Bacteria"/>
</dbReference>
<dbReference type="HOGENOM" id="CLU_016950_7_0_3"/>
<dbReference type="OrthoDB" id="9806956at2"/>
<dbReference type="GO" id="GO:0005829">
    <property type="term" value="C:cytosol"/>
    <property type="evidence" value="ECO:0007669"/>
    <property type="project" value="TreeGrafter"/>
</dbReference>
<dbReference type="GO" id="GO:0000287">
    <property type="term" value="F:magnesium ion binding"/>
    <property type="evidence" value="ECO:0007669"/>
    <property type="project" value="UniProtKB-UniRule"/>
</dbReference>
<dbReference type="GO" id="GO:0008966">
    <property type="term" value="F:phosphoglucosamine mutase activity"/>
    <property type="evidence" value="ECO:0007669"/>
    <property type="project" value="UniProtKB-UniRule"/>
</dbReference>
<dbReference type="GO" id="GO:0004615">
    <property type="term" value="F:phosphomannomutase activity"/>
    <property type="evidence" value="ECO:0007669"/>
    <property type="project" value="TreeGrafter"/>
</dbReference>
<dbReference type="GO" id="GO:0005975">
    <property type="term" value="P:carbohydrate metabolic process"/>
    <property type="evidence" value="ECO:0007669"/>
    <property type="project" value="InterPro"/>
</dbReference>
<dbReference type="GO" id="GO:0009252">
    <property type="term" value="P:peptidoglycan biosynthetic process"/>
    <property type="evidence" value="ECO:0007669"/>
    <property type="project" value="TreeGrafter"/>
</dbReference>
<dbReference type="GO" id="GO:0006048">
    <property type="term" value="P:UDP-N-acetylglucosamine biosynthetic process"/>
    <property type="evidence" value="ECO:0007669"/>
    <property type="project" value="TreeGrafter"/>
</dbReference>
<dbReference type="CDD" id="cd05802">
    <property type="entry name" value="GlmM"/>
    <property type="match status" value="1"/>
</dbReference>
<dbReference type="FunFam" id="3.30.310.50:FF:000001">
    <property type="entry name" value="Phosphoglucosamine mutase"/>
    <property type="match status" value="1"/>
</dbReference>
<dbReference type="FunFam" id="3.40.120.10:FF:000001">
    <property type="entry name" value="Phosphoglucosamine mutase"/>
    <property type="match status" value="1"/>
</dbReference>
<dbReference type="FunFam" id="3.40.120.10:FF:000002">
    <property type="entry name" value="Phosphoglucosamine mutase"/>
    <property type="match status" value="1"/>
</dbReference>
<dbReference type="FunFam" id="3.40.120.10:FF:000003">
    <property type="entry name" value="Phosphoglucosamine mutase"/>
    <property type="match status" value="1"/>
</dbReference>
<dbReference type="Gene3D" id="3.40.120.10">
    <property type="entry name" value="Alpha-D-Glucose-1,6-Bisphosphate, subunit A, domain 3"/>
    <property type="match status" value="3"/>
</dbReference>
<dbReference type="Gene3D" id="3.30.310.50">
    <property type="entry name" value="Alpha-D-phosphohexomutase, C-terminal domain"/>
    <property type="match status" value="1"/>
</dbReference>
<dbReference type="HAMAP" id="MF_01554_B">
    <property type="entry name" value="GlmM_B"/>
    <property type="match status" value="1"/>
</dbReference>
<dbReference type="InterPro" id="IPR005844">
    <property type="entry name" value="A-D-PHexomutase_a/b/a-I"/>
</dbReference>
<dbReference type="InterPro" id="IPR016055">
    <property type="entry name" value="A-D-PHexomutase_a/b/a-I/II/III"/>
</dbReference>
<dbReference type="InterPro" id="IPR005845">
    <property type="entry name" value="A-D-PHexomutase_a/b/a-II"/>
</dbReference>
<dbReference type="InterPro" id="IPR005846">
    <property type="entry name" value="A-D-PHexomutase_a/b/a-III"/>
</dbReference>
<dbReference type="InterPro" id="IPR005843">
    <property type="entry name" value="A-D-PHexomutase_C"/>
</dbReference>
<dbReference type="InterPro" id="IPR036900">
    <property type="entry name" value="A-D-PHexomutase_C_sf"/>
</dbReference>
<dbReference type="InterPro" id="IPR016066">
    <property type="entry name" value="A-D-PHexomutase_CS"/>
</dbReference>
<dbReference type="InterPro" id="IPR005841">
    <property type="entry name" value="Alpha-D-phosphohexomutase_SF"/>
</dbReference>
<dbReference type="InterPro" id="IPR006352">
    <property type="entry name" value="GlmM_bact"/>
</dbReference>
<dbReference type="InterPro" id="IPR050060">
    <property type="entry name" value="Phosphoglucosamine_mutase"/>
</dbReference>
<dbReference type="NCBIfam" id="TIGR01455">
    <property type="entry name" value="glmM"/>
    <property type="match status" value="1"/>
</dbReference>
<dbReference type="PANTHER" id="PTHR42946:SF1">
    <property type="entry name" value="PHOSPHOGLUCOMUTASE (ALPHA-D-GLUCOSE-1,6-BISPHOSPHATE-DEPENDENT)"/>
    <property type="match status" value="1"/>
</dbReference>
<dbReference type="PANTHER" id="PTHR42946">
    <property type="entry name" value="PHOSPHOHEXOSE MUTASE"/>
    <property type="match status" value="1"/>
</dbReference>
<dbReference type="Pfam" id="PF02878">
    <property type="entry name" value="PGM_PMM_I"/>
    <property type="match status" value="1"/>
</dbReference>
<dbReference type="Pfam" id="PF02879">
    <property type="entry name" value="PGM_PMM_II"/>
    <property type="match status" value="1"/>
</dbReference>
<dbReference type="Pfam" id="PF02880">
    <property type="entry name" value="PGM_PMM_III"/>
    <property type="match status" value="1"/>
</dbReference>
<dbReference type="Pfam" id="PF00408">
    <property type="entry name" value="PGM_PMM_IV"/>
    <property type="match status" value="1"/>
</dbReference>
<dbReference type="PRINTS" id="PR00509">
    <property type="entry name" value="PGMPMM"/>
</dbReference>
<dbReference type="SUPFAM" id="SSF55957">
    <property type="entry name" value="Phosphoglucomutase, C-terminal domain"/>
    <property type="match status" value="1"/>
</dbReference>
<dbReference type="SUPFAM" id="SSF53738">
    <property type="entry name" value="Phosphoglucomutase, first 3 domains"/>
    <property type="match status" value="3"/>
</dbReference>
<dbReference type="PROSITE" id="PS00710">
    <property type="entry name" value="PGM_PMM"/>
    <property type="match status" value="1"/>
</dbReference>
<reference key="1">
    <citation type="journal article" date="2015" name="Proc. Natl. Acad. Sci. U.S.A.">
        <title>Trichodesmium genome maintains abundant, widespread noncoding DNA in situ, despite oligotrophic lifestyle.</title>
        <authorList>
            <person name="Walworth N."/>
            <person name="Pfreundt U."/>
            <person name="Nelson W.C."/>
            <person name="Mincer T."/>
            <person name="Heidelberg J.F."/>
            <person name="Fu F."/>
            <person name="Waterbury J.B."/>
            <person name="Glavina del Rio T."/>
            <person name="Goodwin L."/>
            <person name="Kyrpides N.C."/>
            <person name="Land M.L."/>
            <person name="Woyke T."/>
            <person name="Hutchins D.A."/>
            <person name="Hess W.R."/>
            <person name="Webb E.A."/>
        </authorList>
    </citation>
    <scope>NUCLEOTIDE SEQUENCE [LARGE SCALE GENOMIC DNA]</scope>
    <source>
        <strain>IMS101</strain>
    </source>
</reference>
<sequence length="489" mass="53094">MVTTPSFKPTYEQNTFKLSPTATTTTLPWNNTSLPTTPLFGTDGIRGKAGELLTAPMALQIGFWAGQVLPQYCQNPGPIIMGQDTRNSGNMLAMALSAGLTAAGLEVWNLGLCPTPCVAYITSISEAIGGVMISASHNPPEDNGIKFFGSDGTKLSSELQQKIESGIRGTANFPTNHSNWGQHYHRPELVKEYQASLHSPLTPGSLQGMKIVLDLAWGAAVHTAPEVFRGMGAEIICLHDQPNGDRINVNCGSTHLSHLQQAVIEHNANLGFAFDGDADRVLAIDSQGRSIDGDYILYFWGQSLSKARLLPNNLIVTTVMANLGFEHAWNKQGGKILRTKVGDQYVHAEMQRTGSMLGGEQSGHVLCPHYGITGDGLMTALHLATLVKNSGISLAELVDQSFKTYPQLLRNVRVEDRDRRANWKNCEPLVKTIEEAETALADLGRVLVRASGTEPVIRVMVEAINLELAKSWTENIVLAVQQHLLPTKD</sequence>
<proteinExistence type="inferred from homology"/>
<comment type="function">
    <text evidence="1">Catalyzes the conversion of glucosamine-6-phosphate to glucosamine-1-phosphate.</text>
</comment>
<comment type="catalytic activity">
    <reaction evidence="1">
        <text>alpha-D-glucosamine 1-phosphate = D-glucosamine 6-phosphate</text>
        <dbReference type="Rhea" id="RHEA:23424"/>
        <dbReference type="ChEBI" id="CHEBI:58516"/>
        <dbReference type="ChEBI" id="CHEBI:58725"/>
        <dbReference type="EC" id="5.4.2.10"/>
    </reaction>
</comment>
<comment type="cofactor">
    <cofactor evidence="1">
        <name>Mg(2+)</name>
        <dbReference type="ChEBI" id="CHEBI:18420"/>
    </cofactor>
    <text evidence="1">Binds 1 Mg(2+) ion per subunit.</text>
</comment>
<comment type="PTM">
    <text evidence="1">Activated by phosphorylation.</text>
</comment>
<comment type="similarity">
    <text evidence="1">Belongs to the phosphohexose mutase family.</text>
</comment>
<gene>
    <name evidence="1" type="primary">glmM</name>
    <name type="ordered locus">Tery_1095</name>
</gene>